<feature type="chain" id="PRO_1000122958" description="Bifunctional purine biosynthesis protein PurH">
    <location>
        <begin position="1"/>
        <end position="529"/>
    </location>
</feature>
<feature type="domain" description="MGS-like" evidence="2">
    <location>
        <begin position="1"/>
        <end position="148"/>
    </location>
</feature>
<feature type="modified residue" description="N6-acetyllysine" evidence="1">
    <location>
        <position position="287"/>
    </location>
</feature>
<proteinExistence type="inferred from homology"/>
<evidence type="ECO:0000255" key="1">
    <source>
        <dbReference type="HAMAP-Rule" id="MF_00139"/>
    </source>
</evidence>
<evidence type="ECO:0000255" key="2">
    <source>
        <dbReference type="PROSITE-ProRule" id="PRU01202"/>
    </source>
</evidence>
<protein>
    <recommendedName>
        <fullName evidence="1">Bifunctional purine biosynthesis protein PurH</fullName>
    </recommendedName>
    <domain>
        <recommendedName>
            <fullName evidence="1">Phosphoribosylaminoimidazolecarboxamide formyltransferase</fullName>
            <ecNumber evidence="1">2.1.2.3</ecNumber>
        </recommendedName>
        <alternativeName>
            <fullName evidence="1">AICAR transformylase</fullName>
        </alternativeName>
    </domain>
    <domain>
        <recommendedName>
            <fullName evidence="1">IMP cyclohydrolase</fullName>
            <ecNumber evidence="1">3.5.4.10</ecNumber>
        </recommendedName>
        <alternativeName>
            <fullName evidence="1">ATIC</fullName>
        </alternativeName>
        <alternativeName>
            <fullName evidence="1">IMP synthase</fullName>
        </alternativeName>
        <alternativeName>
            <fullName evidence="1">Inosinicase</fullName>
        </alternativeName>
    </domain>
</protein>
<keyword id="KW-0007">Acetylation</keyword>
<keyword id="KW-0378">Hydrolase</keyword>
<keyword id="KW-0511">Multifunctional enzyme</keyword>
<keyword id="KW-0658">Purine biosynthesis</keyword>
<keyword id="KW-1185">Reference proteome</keyword>
<keyword id="KW-0808">Transferase</keyword>
<sequence>MQQRRPVRRALLSVSDKAGIVEFAQALSARGVELLSTGGTARLLAEKGLPVTEVSDYTGFPEMMDGRVKTLHPKVHGGILGRRGLDDAIMEEHQILPIDMVVVNLYPFAQTVAREGCSLEDAVENIDIGGPTMVRSAAKNHKDVAIVVKSSDYDAIIKEMDANEGSLMLATRFDLAIKAFEHTAAYDSMIANYFGSMVPAYHGESKEAAGRFPRTLNLNFIKKQDMRYGENSHQQAAFYIEENVKEASVATATQVQGKALSYNNIADTDAALECVKEFAEPACVIVKHANPCGVAVSNSILDAYDRAYKTDPTSAFGGIIAFNRELDAETAQAIISRQFVEVIIAPSASEEALKITAAKQNVRVLICGQWGERAPGLDFKRVNGGLLVQDRDLGIVGAEELRVVTKRQPTEQELRDALFCWKVAKFVKSNAIVYAKNNMTIGIGAGQMSRVYSAKIAGIKAADEGLEVKGSSMASDAFFPFRDGIDAAAAAGVTCVIQPGGSIRDDEVIAAADEHGIAMLFTDMRHFRH</sequence>
<reference key="1">
    <citation type="journal article" date="2009" name="J. Bacteriol.">
        <title>Complete genome sequence and comparative genome analysis of enteropathogenic Escherichia coli O127:H6 strain E2348/69.</title>
        <authorList>
            <person name="Iguchi A."/>
            <person name="Thomson N.R."/>
            <person name="Ogura Y."/>
            <person name="Saunders D."/>
            <person name="Ooka T."/>
            <person name="Henderson I.R."/>
            <person name="Harris D."/>
            <person name="Asadulghani M."/>
            <person name="Kurokawa K."/>
            <person name="Dean P."/>
            <person name="Kenny B."/>
            <person name="Quail M.A."/>
            <person name="Thurston S."/>
            <person name="Dougan G."/>
            <person name="Hayashi T."/>
            <person name="Parkhill J."/>
            <person name="Frankel G."/>
        </authorList>
    </citation>
    <scope>NUCLEOTIDE SEQUENCE [LARGE SCALE GENOMIC DNA]</scope>
    <source>
        <strain>E2348/69 / EPEC</strain>
    </source>
</reference>
<accession>B7UPG1</accession>
<gene>
    <name evidence="1" type="primary">purH</name>
    <name type="ordered locus">E2348C_4313</name>
</gene>
<comment type="catalytic activity">
    <reaction evidence="1">
        <text>(6R)-10-formyltetrahydrofolate + 5-amino-1-(5-phospho-beta-D-ribosyl)imidazole-4-carboxamide = 5-formamido-1-(5-phospho-D-ribosyl)imidazole-4-carboxamide + (6S)-5,6,7,8-tetrahydrofolate</text>
        <dbReference type="Rhea" id="RHEA:22192"/>
        <dbReference type="ChEBI" id="CHEBI:57453"/>
        <dbReference type="ChEBI" id="CHEBI:58467"/>
        <dbReference type="ChEBI" id="CHEBI:58475"/>
        <dbReference type="ChEBI" id="CHEBI:195366"/>
        <dbReference type="EC" id="2.1.2.3"/>
    </reaction>
</comment>
<comment type="catalytic activity">
    <reaction evidence="1">
        <text>IMP + H2O = 5-formamido-1-(5-phospho-D-ribosyl)imidazole-4-carboxamide</text>
        <dbReference type="Rhea" id="RHEA:18445"/>
        <dbReference type="ChEBI" id="CHEBI:15377"/>
        <dbReference type="ChEBI" id="CHEBI:58053"/>
        <dbReference type="ChEBI" id="CHEBI:58467"/>
        <dbReference type="EC" id="3.5.4.10"/>
    </reaction>
</comment>
<comment type="pathway">
    <text evidence="1">Purine metabolism; IMP biosynthesis via de novo pathway; 5-formamido-1-(5-phospho-D-ribosyl)imidazole-4-carboxamide from 5-amino-1-(5-phospho-D-ribosyl)imidazole-4-carboxamide (10-formyl THF route): step 1/1.</text>
</comment>
<comment type="pathway">
    <text evidence="1">Purine metabolism; IMP biosynthesis via de novo pathway; IMP from 5-formamido-1-(5-phospho-D-ribosyl)imidazole-4-carboxamide: step 1/1.</text>
</comment>
<comment type="domain">
    <text evidence="1">The IMP cyclohydrolase activity resides in the N-terminal region.</text>
</comment>
<comment type="similarity">
    <text evidence="1">Belongs to the PurH family.</text>
</comment>
<organism>
    <name type="scientific">Escherichia coli O127:H6 (strain E2348/69 / EPEC)</name>
    <dbReference type="NCBI Taxonomy" id="574521"/>
    <lineage>
        <taxon>Bacteria</taxon>
        <taxon>Pseudomonadati</taxon>
        <taxon>Pseudomonadota</taxon>
        <taxon>Gammaproteobacteria</taxon>
        <taxon>Enterobacterales</taxon>
        <taxon>Enterobacteriaceae</taxon>
        <taxon>Escherichia</taxon>
    </lineage>
</organism>
<dbReference type="EC" id="2.1.2.3" evidence="1"/>
<dbReference type="EC" id="3.5.4.10" evidence="1"/>
<dbReference type="EMBL" id="FM180568">
    <property type="protein sequence ID" value="CAS11861.1"/>
    <property type="molecule type" value="Genomic_DNA"/>
</dbReference>
<dbReference type="RefSeq" id="WP_001187528.1">
    <property type="nucleotide sequence ID" value="NC_011601.1"/>
</dbReference>
<dbReference type="SMR" id="B7UPG1"/>
<dbReference type="KEGG" id="ecg:E2348C_4313"/>
<dbReference type="HOGENOM" id="CLU_016316_5_2_6"/>
<dbReference type="UniPathway" id="UPA00074">
    <property type="reaction ID" value="UER00133"/>
</dbReference>
<dbReference type="UniPathway" id="UPA00074">
    <property type="reaction ID" value="UER00135"/>
</dbReference>
<dbReference type="Proteomes" id="UP000008205">
    <property type="component" value="Chromosome"/>
</dbReference>
<dbReference type="GO" id="GO:0005829">
    <property type="term" value="C:cytosol"/>
    <property type="evidence" value="ECO:0007669"/>
    <property type="project" value="TreeGrafter"/>
</dbReference>
<dbReference type="GO" id="GO:0003937">
    <property type="term" value="F:IMP cyclohydrolase activity"/>
    <property type="evidence" value="ECO:0007669"/>
    <property type="project" value="UniProtKB-UniRule"/>
</dbReference>
<dbReference type="GO" id="GO:0004643">
    <property type="term" value="F:phosphoribosylaminoimidazolecarboxamide formyltransferase activity"/>
    <property type="evidence" value="ECO:0007669"/>
    <property type="project" value="UniProtKB-UniRule"/>
</dbReference>
<dbReference type="GO" id="GO:0006189">
    <property type="term" value="P:'de novo' IMP biosynthetic process"/>
    <property type="evidence" value="ECO:0007669"/>
    <property type="project" value="UniProtKB-UniRule"/>
</dbReference>
<dbReference type="CDD" id="cd01421">
    <property type="entry name" value="IMPCH"/>
    <property type="match status" value="1"/>
</dbReference>
<dbReference type="FunFam" id="3.40.140.20:FF:000001">
    <property type="entry name" value="Bifunctional purine biosynthesis protein PurH"/>
    <property type="match status" value="1"/>
</dbReference>
<dbReference type="FunFam" id="3.40.140.20:FF:000002">
    <property type="entry name" value="Bifunctional purine biosynthesis protein PurH"/>
    <property type="match status" value="1"/>
</dbReference>
<dbReference type="FunFam" id="3.40.50.1380:FF:000001">
    <property type="entry name" value="Bifunctional purine biosynthesis protein PurH"/>
    <property type="match status" value="1"/>
</dbReference>
<dbReference type="Gene3D" id="3.40.140.20">
    <property type="match status" value="2"/>
</dbReference>
<dbReference type="Gene3D" id="3.40.50.1380">
    <property type="entry name" value="Methylglyoxal synthase-like domain"/>
    <property type="match status" value="1"/>
</dbReference>
<dbReference type="HAMAP" id="MF_00139">
    <property type="entry name" value="PurH"/>
    <property type="match status" value="1"/>
</dbReference>
<dbReference type="InterPro" id="IPR024051">
    <property type="entry name" value="AICAR_Tfase_dup_dom_sf"/>
</dbReference>
<dbReference type="InterPro" id="IPR016193">
    <property type="entry name" value="Cytidine_deaminase-like"/>
</dbReference>
<dbReference type="InterPro" id="IPR011607">
    <property type="entry name" value="MGS-like_dom"/>
</dbReference>
<dbReference type="InterPro" id="IPR036914">
    <property type="entry name" value="MGS-like_dom_sf"/>
</dbReference>
<dbReference type="InterPro" id="IPR002695">
    <property type="entry name" value="PurH-like"/>
</dbReference>
<dbReference type="NCBIfam" id="NF002049">
    <property type="entry name" value="PRK00881.1"/>
    <property type="match status" value="1"/>
</dbReference>
<dbReference type="NCBIfam" id="TIGR00355">
    <property type="entry name" value="purH"/>
    <property type="match status" value="1"/>
</dbReference>
<dbReference type="PANTHER" id="PTHR11692:SF0">
    <property type="entry name" value="BIFUNCTIONAL PURINE BIOSYNTHESIS PROTEIN ATIC"/>
    <property type="match status" value="1"/>
</dbReference>
<dbReference type="PANTHER" id="PTHR11692">
    <property type="entry name" value="BIFUNCTIONAL PURINE BIOSYNTHESIS PROTEIN PURH"/>
    <property type="match status" value="1"/>
</dbReference>
<dbReference type="Pfam" id="PF01808">
    <property type="entry name" value="AICARFT_IMPCHas"/>
    <property type="match status" value="1"/>
</dbReference>
<dbReference type="Pfam" id="PF02142">
    <property type="entry name" value="MGS"/>
    <property type="match status" value="1"/>
</dbReference>
<dbReference type="PIRSF" id="PIRSF000414">
    <property type="entry name" value="AICARFT_IMPCHas"/>
    <property type="match status" value="1"/>
</dbReference>
<dbReference type="SMART" id="SM00798">
    <property type="entry name" value="AICARFT_IMPCHas"/>
    <property type="match status" value="1"/>
</dbReference>
<dbReference type="SMART" id="SM00851">
    <property type="entry name" value="MGS"/>
    <property type="match status" value="1"/>
</dbReference>
<dbReference type="SUPFAM" id="SSF53927">
    <property type="entry name" value="Cytidine deaminase-like"/>
    <property type="match status" value="1"/>
</dbReference>
<dbReference type="SUPFAM" id="SSF52335">
    <property type="entry name" value="Methylglyoxal synthase-like"/>
    <property type="match status" value="1"/>
</dbReference>
<dbReference type="PROSITE" id="PS51855">
    <property type="entry name" value="MGS"/>
    <property type="match status" value="1"/>
</dbReference>
<name>PUR9_ECO27</name>